<keyword id="KW-0007">Acetylation</keyword>
<keyword id="KW-0963">Cytoplasm</keyword>
<keyword id="KW-1017">Isopeptide bond</keyword>
<keyword id="KW-0488">Methylation</keyword>
<keyword id="KW-0507">mRNA processing</keyword>
<keyword id="KW-0508">mRNA splicing</keyword>
<keyword id="KW-0509">mRNA transport</keyword>
<keyword id="KW-0539">Nucleus</keyword>
<keyword id="KW-0597">Phosphoprotein</keyword>
<keyword id="KW-1185">Reference proteome</keyword>
<keyword id="KW-0677">Repeat</keyword>
<keyword id="KW-0687">Ribonucleoprotein</keyword>
<keyword id="KW-0694">RNA-binding</keyword>
<keyword id="KW-0747">Spliceosome</keyword>
<keyword id="KW-0813">Transport</keyword>
<keyword id="KW-0832">Ubl conjugation</keyword>
<organism>
    <name type="scientific">Macaca mulatta</name>
    <name type="common">Rhesus macaque</name>
    <dbReference type="NCBI Taxonomy" id="9544"/>
    <lineage>
        <taxon>Eukaryota</taxon>
        <taxon>Metazoa</taxon>
        <taxon>Chordata</taxon>
        <taxon>Craniata</taxon>
        <taxon>Vertebrata</taxon>
        <taxon>Euteleostomi</taxon>
        <taxon>Mammalia</taxon>
        <taxon>Eutheria</taxon>
        <taxon>Euarchontoglires</taxon>
        <taxon>Primates</taxon>
        <taxon>Haplorrhini</taxon>
        <taxon>Catarrhini</taxon>
        <taxon>Cercopithecidae</taxon>
        <taxon>Cercopithecinae</taxon>
        <taxon>Macaca</taxon>
    </lineage>
</organism>
<proteinExistence type="evidence at transcript level"/>
<gene>
    <name type="primary">HNRNPA1</name>
    <name type="synonym">HNRPA1</name>
</gene>
<sequence>MSKSESPKEPEQLRKLFIGGLSFETTDESLRSHFEQWGTLTDCVVMRDPNTKRSRGFGFVTYATVEKVDAAMNARPHKVDGRVVEPKRAVSREDSQRPGAHLTVKKIFVGGIKEDTEEHHLRDYFEQYGKIEVIEIMTDRGSGKKRGFAFVTFDDHNSVDKIVIQKYHTVNGHNCEVRKALSKQEMASASSSQRGRSGSGNFGGGRGGGFGGNDNFGRGGNFSGRGGFGGSRGGGGYGGSGDGYNGFGNDGSNFGGGGSYNDFGNYNNQSSNFGPMKGGNFGGRSLGPYGGGGQYFAKPRNQGGYGGSSSSSSYGSGRRF</sequence>
<protein>
    <recommendedName>
        <fullName>Heterogeneous nuclear ribonucleoprotein A1</fullName>
        <shortName>hnRNP A1</shortName>
    </recommendedName>
    <alternativeName>
        <fullName>Helix-destabilizing protein</fullName>
    </alternativeName>
    <alternativeName>
        <fullName>Single-strand-binding protein</fullName>
    </alternativeName>
    <alternativeName>
        <fullName>hnRNP core protein A1</fullName>
    </alternativeName>
    <component>
        <recommendedName>
            <fullName>Heterogeneous nuclear ribonucleoprotein A1, N-terminally processed</fullName>
        </recommendedName>
    </component>
</protein>
<name>ROA1_MACMU</name>
<reference key="1">
    <citation type="journal article" date="1993" name="Biochim. Biophys. Acta">
        <title>cDNA cloning of a hnRNP A1 isoform and its regulation by retinol in monkey tracheobronchial epithelial cells.</title>
        <authorList>
            <person name="An G."/>
            <person name="Wu R."/>
        </authorList>
    </citation>
    <scope>NUCLEOTIDE SEQUENCE [MRNA]</scope>
    <source>
        <tissue>Tracheobronchial epithelium</tissue>
    </source>
</reference>
<dbReference type="EMBL" id="M84334">
    <property type="protein sequence ID" value="AAB01436.1"/>
    <property type="molecule type" value="mRNA"/>
</dbReference>
<dbReference type="PIR" id="S30192">
    <property type="entry name" value="S30192"/>
</dbReference>
<dbReference type="RefSeq" id="NP_001036248.1">
    <property type="nucleotide sequence ID" value="NM_001042783.1"/>
</dbReference>
<dbReference type="SMR" id="Q28521"/>
<dbReference type="STRING" id="9544.ENSMMUP00000039316"/>
<dbReference type="PaxDb" id="9544-ENSMMUP00000038816"/>
<dbReference type="GeneID" id="702977"/>
<dbReference type="KEGG" id="mcc:702977"/>
<dbReference type="CTD" id="3178"/>
<dbReference type="eggNOG" id="KOG0118">
    <property type="taxonomic scope" value="Eukaryota"/>
</dbReference>
<dbReference type="InParanoid" id="Q28521"/>
<dbReference type="OrthoDB" id="6019873at2759"/>
<dbReference type="Proteomes" id="UP000006718">
    <property type="component" value="Unassembled WGS sequence"/>
</dbReference>
<dbReference type="GO" id="GO:0071013">
    <property type="term" value="C:catalytic step 2 spliceosome"/>
    <property type="evidence" value="ECO:0000318"/>
    <property type="project" value="GO_Central"/>
</dbReference>
<dbReference type="GO" id="GO:0005737">
    <property type="term" value="C:cytoplasm"/>
    <property type="evidence" value="ECO:0007669"/>
    <property type="project" value="UniProtKB-SubCell"/>
</dbReference>
<dbReference type="GO" id="GO:0005634">
    <property type="term" value="C:nucleus"/>
    <property type="evidence" value="ECO:0000250"/>
    <property type="project" value="UniProtKB"/>
</dbReference>
<dbReference type="GO" id="GO:1990904">
    <property type="term" value="C:ribonucleoprotein complex"/>
    <property type="evidence" value="ECO:0000250"/>
    <property type="project" value="UniProtKB"/>
</dbReference>
<dbReference type="GO" id="GO:0035198">
    <property type="term" value="F:miRNA binding"/>
    <property type="evidence" value="ECO:0000250"/>
    <property type="project" value="UniProtKB"/>
</dbReference>
<dbReference type="GO" id="GO:1903936">
    <property type="term" value="P:cellular response to sodium arsenite"/>
    <property type="evidence" value="ECO:0000250"/>
    <property type="project" value="UniProtKB"/>
</dbReference>
<dbReference type="GO" id="GO:0000398">
    <property type="term" value="P:mRNA splicing, via spliceosome"/>
    <property type="evidence" value="ECO:0000318"/>
    <property type="project" value="GO_Central"/>
</dbReference>
<dbReference type="GO" id="GO:0051028">
    <property type="term" value="P:mRNA transport"/>
    <property type="evidence" value="ECO:0007669"/>
    <property type="project" value="UniProtKB-KW"/>
</dbReference>
<dbReference type="CDD" id="cd12761">
    <property type="entry name" value="RRM1_hnRNPA1"/>
    <property type="match status" value="1"/>
</dbReference>
<dbReference type="FunFam" id="3.30.70.330:FF:000048">
    <property type="entry name" value="Heterogeneous nuclear ribonucleoprotein a1 isoform"/>
    <property type="match status" value="1"/>
</dbReference>
<dbReference type="FunFam" id="3.30.70.330:FF:000429">
    <property type="entry name" value="Heterogeneous nuclear ribonucleoprotein A1-like 2"/>
    <property type="match status" value="1"/>
</dbReference>
<dbReference type="Gene3D" id="3.30.70.330">
    <property type="match status" value="2"/>
</dbReference>
<dbReference type="InterPro" id="IPR021662">
    <property type="entry name" value="HnRNPA1/A2_C"/>
</dbReference>
<dbReference type="InterPro" id="IPR034845">
    <property type="entry name" value="hnRNPA1_RRM1"/>
</dbReference>
<dbReference type="InterPro" id="IPR012677">
    <property type="entry name" value="Nucleotide-bd_a/b_plait_sf"/>
</dbReference>
<dbReference type="InterPro" id="IPR035979">
    <property type="entry name" value="RBD_domain_sf"/>
</dbReference>
<dbReference type="InterPro" id="IPR000504">
    <property type="entry name" value="RRM_dom"/>
</dbReference>
<dbReference type="PANTHER" id="PTHR48026:SF2">
    <property type="entry name" value="HETEROGENEOUS NUCLEAR RIBONUCLEOPROTEIN A1-RELATED"/>
    <property type="match status" value="1"/>
</dbReference>
<dbReference type="PANTHER" id="PTHR48026">
    <property type="entry name" value="HOMOLOGOUS TO DROSOPHILA SQD (SQUID) PROTEIN"/>
    <property type="match status" value="1"/>
</dbReference>
<dbReference type="Pfam" id="PF11627">
    <property type="entry name" value="HnRNPA1_LC"/>
    <property type="match status" value="1"/>
</dbReference>
<dbReference type="Pfam" id="PF00076">
    <property type="entry name" value="RRM_1"/>
    <property type="match status" value="2"/>
</dbReference>
<dbReference type="SMART" id="SM00360">
    <property type="entry name" value="RRM"/>
    <property type="match status" value="2"/>
</dbReference>
<dbReference type="SUPFAM" id="SSF54928">
    <property type="entry name" value="RNA-binding domain, RBD"/>
    <property type="match status" value="2"/>
</dbReference>
<dbReference type="PROSITE" id="PS50102">
    <property type="entry name" value="RRM"/>
    <property type="match status" value="2"/>
</dbReference>
<accession>Q28521</accession>
<feature type="chain" id="PRO_0000424510" description="Heterogeneous nuclear ribonucleoprotein A1">
    <location>
        <begin position="1"/>
        <end position="320"/>
    </location>
</feature>
<feature type="initiator methionine" description="Removed; alternate" evidence="3">
    <location>
        <position position="1"/>
    </location>
</feature>
<feature type="chain" id="PRO_0000081829" description="Heterogeneous nuclear ribonucleoprotein A1, N-terminally processed">
    <location>
        <begin position="2"/>
        <end position="320"/>
    </location>
</feature>
<feature type="domain" description="RRM 1" evidence="6">
    <location>
        <begin position="14"/>
        <end position="97"/>
    </location>
</feature>
<feature type="domain" description="RRM 2" evidence="6">
    <location>
        <begin position="105"/>
        <end position="184"/>
    </location>
</feature>
<feature type="region of interest" description="Globular A domain">
    <location>
        <begin position="4"/>
        <end position="94"/>
    </location>
</feature>
<feature type="region of interest" description="Globular B domain">
    <location>
        <begin position="95"/>
        <end position="185"/>
    </location>
</feature>
<feature type="region of interest" description="Disordered" evidence="7">
    <location>
        <begin position="182"/>
        <end position="216"/>
    </location>
</feature>
<feature type="region of interest" description="RNA-binding RGG-box">
    <location>
        <begin position="218"/>
        <end position="240"/>
    </location>
</feature>
<feature type="region of interest" description="Nuclear targeting sequence" evidence="1">
    <location>
        <begin position="268"/>
        <end position="305"/>
    </location>
</feature>
<feature type="region of interest" description="Disordered" evidence="7">
    <location>
        <begin position="277"/>
        <end position="320"/>
    </location>
</feature>
<feature type="compositionally biased region" description="Gly residues" evidence="7">
    <location>
        <begin position="197"/>
        <end position="216"/>
    </location>
</feature>
<feature type="compositionally biased region" description="Gly residues" evidence="7">
    <location>
        <begin position="277"/>
        <end position="294"/>
    </location>
</feature>
<feature type="compositionally biased region" description="Low complexity" evidence="7">
    <location>
        <begin position="308"/>
        <end position="320"/>
    </location>
</feature>
<feature type="modified residue" description="N-acetylmethionine" evidence="3">
    <location>
        <position position="1"/>
    </location>
</feature>
<feature type="modified residue" description="N-acetylserine; in Heterogeneous nuclear ribonucleoprotein A1, N-terminally processed" evidence="3">
    <location>
        <position position="2"/>
    </location>
</feature>
<feature type="modified residue" description="Phosphoserine" evidence="3">
    <location>
        <position position="2"/>
    </location>
</feature>
<feature type="modified residue" description="N6-acetyllysine; alternate" evidence="3">
    <location>
        <position position="3"/>
    </location>
</feature>
<feature type="modified residue" description="Phosphoserine" evidence="3">
    <location>
        <position position="4"/>
    </location>
</feature>
<feature type="modified residue" description="Phosphoserine" evidence="3">
    <location>
        <position position="6"/>
    </location>
</feature>
<feature type="modified residue" description="Phosphoserine" evidence="5">
    <location>
        <position position="22"/>
    </location>
</feature>
<feature type="modified residue" description="Phosphoserine; by MKNK2" evidence="3">
    <location>
        <position position="192"/>
    </location>
</feature>
<feature type="modified residue" description="Asymmetric dimethylarginine; alternate" evidence="4">
    <location>
        <position position="194"/>
    </location>
</feature>
<feature type="modified residue" description="Dimethylated arginine; alternate" evidence="3">
    <location>
        <position position="194"/>
    </location>
</feature>
<feature type="modified residue" description="Omega-N-methylarginine; alternate" evidence="5">
    <location>
        <position position="194"/>
    </location>
</feature>
<feature type="modified residue" description="Phosphoserine" evidence="3">
    <location>
        <position position="199"/>
    </location>
</feature>
<feature type="modified residue" description="Asymmetric dimethylarginine; alternate" evidence="3">
    <location>
        <position position="206"/>
    </location>
</feature>
<feature type="modified residue" description="Dimethylated arginine; alternate" evidence="3">
    <location>
        <position position="206"/>
    </location>
</feature>
<feature type="modified residue" description="Omega-N-methylarginine; alternate" evidence="3">
    <location>
        <position position="206"/>
    </location>
</feature>
<feature type="modified residue" description="Asymmetric dimethylarginine; alternate" evidence="3">
    <location>
        <position position="218"/>
    </location>
</feature>
<feature type="modified residue" description="Omega-N-methylarginine; alternate" evidence="3">
    <location>
        <position position="218"/>
    </location>
</feature>
<feature type="modified residue" description="Asymmetric dimethylarginine; alternate" evidence="3">
    <location>
        <position position="225"/>
    </location>
</feature>
<feature type="modified residue" description="Dimethylated arginine; alternate" evidence="3">
    <location>
        <position position="225"/>
    </location>
</feature>
<feature type="modified residue" description="Omega-N-methylarginine; alternate" evidence="3">
    <location>
        <position position="225"/>
    </location>
</feature>
<feature type="modified residue" description="Asymmetric dimethylarginine; alternate" evidence="2">
    <location>
        <position position="232"/>
    </location>
</feature>
<feature type="modified residue" description="Omega-N-methylarginine; alternate" evidence="3">
    <location>
        <position position="232"/>
    </location>
</feature>
<feature type="modified residue" description="Omega-N-methylarginine" evidence="3">
    <location>
        <position position="284"/>
    </location>
</feature>
<feature type="modified residue" description="Phosphoserine" evidence="3">
    <location>
        <position position="285"/>
    </location>
</feature>
<feature type="modified residue" description="N6-acetyllysine; alternate" evidence="3">
    <location>
        <position position="298"/>
    </location>
</feature>
<feature type="modified residue" description="Omega-N-methylarginine" evidence="3">
    <location>
        <position position="300"/>
    </location>
</feature>
<feature type="modified residue" description="Phosphoserine" evidence="3">
    <location>
        <position position="309"/>
    </location>
</feature>
<feature type="modified residue" description="Phosphoserine; by MKNK2" evidence="3">
    <location>
        <position position="310"/>
    </location>
</feature>
<feature type="modified residue" description="Phosphoserine; by MKNK2" evidence="3">
    <location>
        <position position="311"/>
    </location>
</feature>
<feature type="modified residue" description="Phosphoserine; by MKNK2" evidence="3">
    <location>
        <position position="312"/>
    </location>
</feature>
<feature type="modified residue" description="Phosphoserine" evidence="3">
    <location>
        <position position="313"/>
    </location>
</feature>
<feature type="modified residue" description="Phosphoserine" evidence="3">
    <location>
        <position position="316"/>
    </location>
</feature>
<feature type="modified residue" description="Omega-N-methylarginine" evidence="3">
    <location>
        <position position="318"/>
    </location>
</feature>
<feature type="cross-link" description="Glycyl lysine isopeptide (Lys-Gly) (interchain with G-Cter in SUMO2); alternate" evidence="3">
    <location>
        <position position="3"/>
    </location>
</feature>
<feature type="cross-link" description="Glycyl lysine isopeptide (Lys-Gly) (interchain with G-Cter in SUMO2)" evidence="3">
    <location>
        <position position="8"/>
    </location>
</feature>
<feature type="cross-link" description="Glycyl lysine isopeptide (Lys-Gly) (interchain with G-Cter in SUMO2)" evidence="3">
    <location>
        <position position="78"/>
    </location>
</feature>
<feature type="cross-link" description="Glycyl lysine isopeptide (Lys-Gly) (interchain with G-Cter in SUMO)" evidence="1">
    <location>
        <position position="113"/>
    </location>
</feature>
<feature type="cross-link" description="Glycyl lysine isopeptide (Lys-Gly) (interchain with G-Cter in SUMO2)" evidence="3">
    <location>
        <position position="179"/>
    </location>
</feature>
<feature type="cross-link" description="Glycyl lysine isopeptide (Lys-Gly) (interchain with G-Cter in SUMO2)" evidence="3">
    <location>
        <position position="183"/>
    </location>
</feature>
<feature type="cross-link" description="Glycyl lysine isopeptide (Lys-Gly) (interchain with G-Cter in SUMO2); alternate" evidence="3">
    <location>
        <position position="298"/>
    </location>
</feature>
<comment type="function">
    <text evidence="3">Involved in the packaging of pre-mRNA into hnRNP particles, transport of poly(A) mRNA from the nucleus to the cytoplasm and modulation of splice site selection. Plays a role in the splicing of pyruvate kinase PKM by binding repressively to sequences flanking PKM exon 9, inhibiting exon 9 inclusion and resulting in exon 10 inclusion and production of the PKM M2 isoform. Binds to the IRES and thereby inhibits the translation of the apoptosis protease activating factor APAF1. May bind to specific miRNA hairpins.</text>
</comment>
<comment type="subunit">
    <text evidence="3">Identified in the spliceosome C complex. Identified in a IGF2BP1-dependent mRNP granule complex containing untranslated mRNAs. Interacts with SEPT6, C9orf72, KHDRBS1, UBQLN2 (By similarity). Interacts with PPIA/CYPA (By similarity).</text>
</comment>
<comment type="subcellular location">
    <subcellularLocation>
        <location>Nucleus</location>
    </subcellularLocation>
    <subcellularLocation>
        <location>Cytoplasm</location>
    </subcellularLocation>
    <text evidence="1">Localized in cytoplasmic mRNP granules containing untranslated mRNAs (By similarity). Shuttles continuously between the nucleus and the cytoplasm along with mRNA. Component of ribonucleosomes.</text>
</comment>
<comment type="PTM">
    <text evidence="1">Sumoylated.</text>
</comment>
<evidence type="ECO:0000250" key="1"/>
<evidence type="ECO:0000250" key="2">
    <source>
        <dbReference type="UniProtKB" id="P04256"/>
    </source>
</evidence>
<evidence type="ECO:0000250" key="3">
    <source>
        <dbReference type="UniProtKB" id="P09651"/>
    </source>
</evidence>
<evidence type="ECO:0000250" key="4">
    <source>
        <dbReference type="UniProtKB" id="P09867"/>
    </source>
</evidence>
<evidence type="ECO:0000250" key="5">
    <source>
        <dbReference type="UniProtKB" id="P49312"/>
    </source>
</evidence>
<evidence type="ECO:0000255" key="6">
    <source>
        <dbReference type="PROSITE-ProRule" id="PRU00176"/>
    </source>
</evidence>
<evidence type="ECO:0000256" key="7">
    <source>
        <dbReference type="SAM" id="MobiDB-lite"/>
    </source>
</evidence>